<reference key="1">
    <citation type="journal article" date="2002" name="Nucleic Acids Res.">
        <title>The complete genomic sequence of Mycoplasma penetrans, an intracellular bacterial pathogen in humans.</title>
        <authorList>
            <person name="Sasaki Y."/>
            <person name="Ishikawa J."/>
            <person name="Yamashita A."/>
            <person name="Oshima K."/>
            <person name="Kenri T."/>
            <person name="Furuya K."/>
            <person name="Yoshino C."/>
            <person name="Horino A."/>
            <person name="Shiba T."/>
            <person name="Sasaki T."/>
            <person name="Hattori M."/>
        </authorList>
    </citation>
    <scope>NUCLEOTIDE SEQUENCE [LARGE SCALE GENOMIC DNA]</scope>
    <source>
        <strain>HF-2</strain>
    </source>
</reference>
<feature type="chain" id="PRO_0000345844" description="tRNA modification GTPase MnmE">
    <location>
        <begin position="1"/>
        <end position="444"/>
    </location>
</feature>
<feature type="domain" description="TrmE-type G">
    <location>
        <begin position="215"/>
        <end position="365"/>
    </location>
</feature>
<feature type="binding site" evidence="1">
    <location>
        <position position="21"/>
    </location>
    <ligand>
        <name>(6S)-5-formyl-5,6,7,8-tetrahydrofolate</name>
        <dbReference type="ChEBI" id="CHEBI:57457"/>
    </ligand>
</feature>
<feature type="binding site" evidence="1">
    <location>
        <position position="79"/>
    </location>
    <ligand>
        <name>(6S)-5-formyl-5,6,7,8-tetrahydrofolate</name>
        <dbReference type="ChEBI" id="CHEBI:57457"/>
    </ligand>
</feature>
<feature type="binding site" evidence="1">
    <location>
        <position position="118"/>
    </location>
    <ligand>
        <name>(6S)-5-formyl-5,6,7,8-tetrahydrofolate</name>
        <dbReference type="ChEBI" id="CHEBI:57457"/>
    </ligand>
</feature>
<feature type="binding site" evidence="1">
    <location>
        <begin position="225"/>
        <end position="230"/>
    </location>
    <ligand>
        <name>GTP</name>
        <dbReference type="ChEBI" id="CHEBI:37565"/>
    </ligand>
</feature>
<feature type="binding site" evidence="1">
    <location>
        <position position="225"/>
    </location>
    <ligand>
        <name>K(+)</name>
        <dbReference type="ChEBI" id="CHEBI:29103"/>
    </ligand>
</feature>
<feature type="binding site" evidence="1">
    <location>
        <position position="229"/>
    </location>
    <ligand>
        <name>Mg(2+)</name>
        <dbReference type="ChEBI" id="CHEBI:18420"/>
    </ligand>
</feature>
<feature type="binding site" evidence="1">
    <location>
        <begin position="244"/>
        <end position="250"/>
    </location>
    <ligand>
        <name>GTP</name>
        <dbReference type="ChEBI" id="CHEBI:37565"/>
    </ligand>
</feature>
<feature type="binding site" evidence="1">
    <location>
        <position position="244"/>
    </location>
    <ligand>
        <name>K(+)</name>
        <dbReference type="ChEBI" id="CHEBI:29103"/>
    </ligand>
</feature>
<feature type="binding site" evidence="1">
    <location>
        <position position="246"/>
    </location>
    <ligand>
        <name>K(+)</name>
        <dbReference type="ChEBI" id="CHEBI:29103"/>
    </ligand>
</feature>
<feature type="binding site" evidence="1">
    <location>
        <position position="249"/>
    </location>
    <ligand>
        <name>K(+)</name>
        <dbReference type="ChEBI" id="CHEBI:29103"/>
    </ligand>
</feature>
<feature type="binding site" evidence="1">
    <location>
        <position position="250"/>
    </location>
    <ligand>
        <name>Mg(2+)</name>
        <dbReference type="ChEBI" id="CHEBI:18420"/>
    </ligand>
</feature>
<feature type="binding site" evidence="1">
    <location>
        <begin position="269"/>
        <end position="272"/>
    </location>
    <ligand>
        <name>GTP</name>
        <dbReference type="ChEBI" id="CHEBI:37565"/>
    </ligand>
</feature>
<feature type="binding site" evidence="1">
    <location>
        <position position="444"/>
    </location>
    <ligand>
        <name>(6S)-5-formyl-5,6,7,8-tetrahydrofolate</name>
        <dbReference type="ChEBI" id="CHEBI:57457"/>
    </ligand>
</feature>
<keyword id="KW-0963">Cytoplasm</keyword>
<keyword id="KW-0342">GTP-binding</keyword>
<keyword id="KW-0378">Hydrolase</keyword>
<keyword id="KW-0460">Magnesium</keyword>
<keyword id="KW-0479">Metal-binding</keyword>
<keyword id="KW-0547">Nucleotide-binding</keyword>
<keyword id="KW-0630">Potassium</keyword>
<keyword id="KW-1185">Reference proteome</keyword>
<keyword id="KW-0819">tRNA processing</keyword>
<protein>
    <recommendedName>
        <fullName evidence="1">tRNA modification GTPase MnmE</fullName>
        <ecNumber evidence="1">3.6.-.-</ecNumber>
    </recommendedName>
</protein>
<evidence type="ECO:0000255" key="1">
    <source>
        <dbReference type="HAMAP-Rule" id="MF_00379"/>
    </source>
</evidence>
<organism>
    <name type="scientific">Malacoplasma penetrans (strain HF-2)</name>
    <name type="common">Mycoplasma penetrans</name>
    <dbReference type="NCBI Taxonomy" id="272633"/>
    <lineage>
        <taxon>Bacteria</taxon>
        <taxon>Bacillati</taxon>
        <taxon>Mycoplasmatota</taxon>
        <taxon>Mycoplasmoidales</taxon>
        <taxon>Mycoplasmoidaceae</taxon>
        <taxon>Malacoplasma</taxon>
    </lineage>
</organism>
<dbReference type="EC" id="3.6.-.-" evidence="1"/>
<dbReference type="EMBL" id="BA000026">
    <property type="protein sequence ID" value="BAC44605.1"/>
    <property type="molecule type" value="Genomic_DNA"/>
</dbReference>
<dbReference type="RefSeq" id="WP_011077634.1">
    <property type="nucleotide sequence ID" value="NC_004432.1"/>
</dbReference>
<dbReference type="SMR" id="Q8EUV6"/>
<dbReference type="FunCoup" id="Q8EUV6">
    <property type="interactions" value="232"/>
</dbReference>
<dbReference type="STRING" id="272633.gene:10731934"/>
<dbReference type="KEGG" id="mpe:MYPE8120"/>
<dbReference type="eggNOG" id="COG0486">
    <property type="taxonomic scope" value="Bacteria"/>
</dbReference>
<dbReference type="HOGENOM" id="CLU_019624_4_1_14"/>
<dbReference type="InParanoid" id="Q8EUV6"/>
<dbReference type="Proteomes" id="UP000002522">
    <property type="component" value="Chromosome"/>
</dbReference>
<dbReference type="GO" id="GO:0005829">
    <property type="term" value="C:cytosol"/>
    <property type="evidence" value="ECO:0007669"/>
    <property type="project" value="TreeGrafter"/>
</dbReference>
<dbReference type="GO" id="GO:0005525">
    <property type="term" value="F:GTP binding"/>
    <property type="evidence" value="ECO:0007669"/>
    <property type="project" value="UniProtKB-UniRule"/>
</dbReference>
<dbReference type="GO" id="GO:0003924">
    <property type="term" value="F:GTPase activity"/>
    <property type="evidence" value="ECO:0007669"/>
    <property type="project" value="UniProtKB-UniRule"/>
</dbReference>
<dbReference type="GO" id="GO:0046872">
    <property type="term" value="F:metal ion binding"/>
    <property type="evidence" value="ECO:0007669"/>
    <property type="project" value="UniProtKB-KW"/>
</dbReference>
<dbReference type="GO" id="GO:0030488">
    <property type="term" value="P:tRNA methylation"/>
    <property type="evidence" value="ECO:0007669"/>
    <property type="project" value="TreeGrafter"/>
</dbReference>
<dbReference type="GO" id="GO:0002098">
    <property type="term" value="P:tRNA wobble uridine modification"/>
    <property type="evidence" value="ECO:0007669"/>
    <property type="project" value="TreeGrafter"/>
</dbReference>
<dbReference type="CDD" id="cd04164">
    <property type="entry name" value="trmE"/>
    <property type="match status" value="1"/>
</dbReference>
<dbReference type="CDD" id="cd14858">
    <property type="entry name" value="TrmE_N"/>
    <property type="match status" value="1"/>
</dbReference>
<dbReference type="FunFam" id="3.40.50.300:FF:001376">
    <property type="entry name" value="tRNA modification GTPase MnmE"/>
    <property type="match status" value="1"/>
</dbReference>
<dbReference type="Gene3D" id="3.40.50.300">
    <property type="entry name" value="P-loop containing nucleotide triphosphate hydrolases"/>
    <property type="match status" value="1"/>
</dbReference>
<dbReference type="Gene3D" id="3.30.1360.120">
    <property type="entry name" value="Probable tRNA modification gtpase trme, domain 1"/>
    <property type="match status" value="1"/>
</dbReference>
<dbReference type="Gene3D" id="1.20.120.430">
    <property type="entry name" value="tRNA modification GTPase MnmE domain 2"/>
    <property type="match status" value="1"/>
</dbReference>
<dbReference type="HAMAP" id="MF_00379">
    <property type="entry name" value="GTPase_MnmE"/>
    <property type="match status" value="1"/>
</dbReference>
<dbReference type="InterPro" id="IPR031168">
    <property type="entry name" value="G_TrmE"/>
</dbReference>
<dbReference type="InterPro" id="IPR006073">
    <property type="entry name" value="GTP-bd"/>
</dbReference>
<dbReference type="InterPro" id="IPR018948">
    <property type="entry name" value="GTP-bd_TrmE_N"/>
</dbReference>
<dbReference type="InterPro" id="IPR004520">
    <property type="entry name" value="GTPase_MnmE"/>
</dbReference>
<dbReference type="InterPro" id="IPR027368">
    <property type="entry name" value="MnmE_dom2"/>
</dbReference>
<dbReference type="InterPro" id="IPR025867">
    <property type="entry name" value="MnmE_helical"/>
</dbReference>
<dbReference type="InterPro" id="IPR027417">
    <property type="entry name" value="P-loop_NTPase"/>
</dbReference>
<dbReference type="InterPro" id="IPR005225">
    <property type="entry name" value="Small_GTP-bd"/>
</dbReference>
<dbReference type="InterPro" id="IPR027266">
    <property type="entry name" value="TrmE/GcvT_dom1"/>
</dbReference>
<dbReference type="NCBIfam" id="TIGR00450">
    <property type="entry name" value="mnmE_trmE_thdF"/>
    <property type="match status" value="1"/>
</dbReference>
<dbReference type="NCBIfam" id="TIGR00231">
    <property type="entry name" value="small_GTP"/>
    <property type="match status" value="1"/>
</dbReference>
<dbReference type="PANTHER" id="PTHR42714">
    <property type="entry name" value="TRNA MODIFICATION GTPASE GTPBP3"/>
    <property type="match status" value="1"/>
</dbReference>
<dbReference type="PANTHER" id="PTHR42714:SF2">
    <property type="entry name" value="TRNA MODIFICATION GTPASE GTPBP3, MITOCHONDRIAL"/>
    <property type="match status" value="1"/>
</dbReference>
<dbReference type="Pfam" id="PF01926">
    <property type="entry name" value="MMR_HSR1"/>
    <property type="match status" value="1"/>
</dbReference>
<dbReference type="Pfam" id="PF12631">
    <property type="entry name" value="MnmE_helical"/>
    <property type="match status" value="1"/>
</dbReference>
<dbReference type="Pfam" id="PF10396">
    <property type="entry name" value="TrmE_N"/>
    <property type="match status" value="1"/>
</dbReference>
<dbReference type="PRINTS" id="PR00326">
    <property type="entry name" value="GTP1OBG"/>
</dbReference>
<dbReference type="SUPFAM" id="SSF103025">
    <property type="entry name" value="Folate-binding domain"/>
    <property type="match status" value="1"/>
</dbReference>
<dbReference type="SUPFAM" id="SSF52540">
    <property type="entry name" value="P-loop containing nucleoside triphosphate hydrolases"/>
    <property type="match status" value="1"/>
</dbReference>
<dbReference type="PROSITE" id="PS51709">
    <property type="entry name" value="G_TRME"/>
    <property type="match status" value="1"/>
</dbReference>
<sequence>MNDTITAIATPNINSAISIIRISGPNTYEIVSKITKKEITKTGYTFVKEFIYQNDLIIDEVIILKYVAPKSFTGEDLIEINCHGGVLITNKILDLILESGARLAENGEFTKRAFLNNKLTLRQANSINNLIFSKTDIATNLSSNGIINSNNDFFLDIKEKIFYLIGKIEVNIDYPEYEDVEQVTAKEFNLEVKEIIDKLNKTINDFNKVSYLYNGLNVVIVGKPNVGKSSLLNSLIKKNKAIVSDIKGTTRDLVTESINLEGLLLNFIDTAGIRESKNKIENIGIKKTMASIKEADLILFLIDDSKKIDKKEKEILNLIKNKNYIIVKNKSDLKVNANSELKGISISALKKDVKPLVNEIKTNLKQGDFNIANNLAICSDNELKIIKQVLLVLKKSYANSLSGFPLDLLVEDLKVAYEKICTIMGLSEDLNIIDKMFKNFCLGK</sequence>
<gene>
    <name evidence="1" type="primary">mnmE</name>
    <name evidence="1" type="synonym">trmE</name>
    <name type="ordered locus">MYPE8120</name>
</gene>
<name>MNME_MALP2</name>
<proteinExistence type="inferred from homology"/>
<accession>Q8EUV6</accession>
<comment type="function">
    <text evidence="1">Exhibits a very high intrinsic GTPase hydrolysis rate. Involved in the addition of a carboxymethylaminomethyl (cmnm) group at the wobble position (U34) of certain tRNAs, forming tRNA-cmnm(5)s(2)U34.</text>
</comment>
<comment type="cofactor">
    <cofactor evidence="1">
        <name>K(+)</name>
        <dbReference type="ChEBI" id="CHEBI:29103"/>
    </cofactor>
    <text evidence="1">Binds 1 potassium ion per subunit.</text>
</comment>
<comment type="subunit">
    <text evidence="1">Homodimer. Heterotetramer of two MnmE and two MnmG subunits.</text>
</comment>
<comment type="subcellular location">
    <subcellularLocation>
        <location evidence="1">Cytoplasm</location>
    </subcellularLocation>
</comment>
<comment type="similarity">
    <text evidence="1">Belongs to the TRAFAC class TrmE-Era-EngA-EngB-Septin-like GTPase superfamily. TrmE GTPase family.</text>
</comment>